<sequence length="279" mass="28648">MDMRTKLMAVVAGAAMAFGGTAAAQGTPAPGKVAATKAPAAATRGKTEVTWWGHAAFVIRSPGGAVIAIDPWLSNPKAPKGAAQPEALDAILLTHGHFDHVGEAKALAEKTGAKVYGSFELINLLGLPEAQSVGANAGGTFQVKDVTFHLVEAVHSSSYAADPKSPAQYAGAPVGYVLEIDKGPTLYHAGDTGPFEGMSLIATQFKPSVALLPIGGHFTMGPAEAAQAVRLLKVKSVIPMHYGTFPLLQGTPDALTGELKKLRNTAKVVVPEPGATTAL</sequence>
<protein>
    <recommendedName>
        <fullName evidence="1">UPF0173 metal-dependent hydrolase MXAN_1394</fullName>
    </recommendedName>
</protein>
<keyword id="KW-0378">Hydrolase</keyword>
<keyword id="KW-1185">Reference proteome</keyword>
<feature type="chain" id="PRO_0000367192" description="UPF0173 metal-dependent hydrolase MXAN_1394">
    <location>
        <begin position="1"/>
        <end position="279"/>
    </location>
</feature>
<name>Y1394_MYXXD</name>
<accession>Q1DCH2</accession>
<organism>
    <name type="scientific">Myxococcus xanthus (strain DK1622)</name>
    <dbReference type="NCBI Taxonomy" id="246197"/>
    <lineage>
        <taxon>Bacteria</taxon>
        <taxon>Pseudomonadati</taxon>
        <taxon>Myxococcota</taxon>
        <taxon>Myxococcia</taxon>
        <taxon>Myxococcales</taxon>
        <taxon>Cystobacterineae</taxon>
        <taxon>Myxococcaceae</taxon>
        <taxon>Myxococcus</taxon>
    </lineage>
</organism>
<gene>
    <name type="ordered locus">MXAN_1394</name>
</gene>
<reference key="1">
    <citation type="journal article" date="2006" name="Proc. Natl. Acad. Sci. U.S.A.">
        <title>Evolution of sensory complexity recorded in a myxobacterial genome.</title>
        <authorList>
            <person name="Goldman B.S."/>
            <person name="Nierman W.C."/>
            <person name="Kaiser D."/>
            <person name="Slater S.C."/>
            <person name="Durkin A.S."/>
            <person name="Eisen J.A."/>
            <person name="Ronning C.M."/>
            <person name="Barbazuk W.B."/>
            <person name="Blanchard M."/>
            <person name="Field C."/>
            <person name="Halling C."/>
            <person name="Hinkle G."/>
            <person name="Iartchuk O."/>
            <person name="Kim H.S."/>
            <person name="Mackenzie C."/>
            <person name="Madupu R."/>
            <person name="Miller N."/>
            <person name="Shvartsbeyn A."/>
            <person name="Sullivan S.A."/>
            <person name="Vaudin M."/>
            <person name="Wiegand R."/>
            <person name="Kaplan H.B."/>
        </authorList>
    </citation>
    <scope>NUCLEOTIDE SEQUENCE [LARGE SCALE GENOMIC DNA]</scope>
    <source>
        <strain>DK1622</strain>
    </source>
</reference>
<comment type="similarity">
    <text evidence="1">Belongs to the UPF0173 family.</text>
</comment>
<evidence type="ECO:0000255" key="1">
    <source>
        <dbReference type="HAMAP-Rule" id="MF_00457"/>
    </source>
</evidence>
<proteinExistence type="inferred from homology"/>
<dbReference type="EMBL" id="CP000113">
    <property type="protein sequence ID" value="ABF88472.1"/>
    <property type="molecule type" value="Genomic_DNA"/>
</dbReference>
<dbReference type="RefSeq" id="WP_011551511.1">
    <property type="nucleotide sequence ID" value="NC_008095.1"/>
</dbReference>
<dbReference type="SMR" id="Q1DCH2"/>
<dbReference type="STRING" id="246197.MXAN_1394"/>
<dbReference type="EnsemblBacteria" id="ABF88472">
    <property type="protein sequence ID" value="ABF88472"/>
    <property type="gene ID" value="MXAN_1394"/>
</dbReference>
<dbReference type="GeneID" id="41358841"/>
<dbReference type="KEGG" id="mxa:MXAN_1394"/>
<dbReference type="eggNOG" id="COG2220">
    <property type="taxonomic scope" value="Bacteria"/>
</dbReference>
<dbReference type="HOGENOM" id="CLU_070010_4_0_7"/>
<dbReference type="OrthoDB" id="9789133at2"/>
<dbReference type="Proteomes" id="UP000002402">
    <property type="component" value="Chromosome"/>
</dbReference>
<dbReference type="GO" id="GO:0016787">
    <property type="term" value="F:hydrolase activity"/>
    <property type="evidence" value="ECO:0007669"/>
    <property type="project" value="UniProtKB-UniRule"/>
</dbReference>
<dbReference type="Gene3D" id="3.60.15.10">
    <property type="entry name" value="Ribonuclease Z/Hydroxyacylglutathione hydrolase-like"/>
    <property type="match status" value="1"/>
</dbReference>
<dbReference type="HAMAP" id="MF_00457">
    <property type="entry name" value="UPF0173"/>
    <property type="match status" value="1"/>
</dbReference>
<dbReference type="InterPro" id="IPR001279">
    <property type="entry name" value="Metallo-B-lactamas"/>
</dbReference>
<dbReference type="InterPro" id="IPR036866">
    <property type="entry name" value="RibonucZ/Hydroxyglut_hydro"/>
</dbReference>
<dbReference type="InterPro" id="IPR022877">
    <property type="entry name" value="UPF0173"/>
</dbReference>
<dbReference type="InterPro" id="IPR050114">
    <property type="entry name" value="UPF0173_UPF0282_UlaG_hydrolase"/>
</dbReference>
<dbReference type="NCBIfam" id="NF001911">
    <property type="entry name" value="PRK00685.1"/>
    <property type="match status" value="1"/>
</dbReference>
<dbReference type="PANTHER" id="PTHR43546:SF3">
    <property type="entry name" value="UPF0173 METAL-DEPENDENT HYDROLASE MJ1163"/>
    <property type="match status" value="1"/>
</dbReference>
<dbReference type="PANTHER" id="PTHR43546">
    <property type="entry name" value="UPF0173 METAL-DEPENDENT HYDROLASE MJ1163-RELATED"/>
    <property type="match status" value="1"/>
</dbReference>
<dbReference type="Pfam" id="PF12706">
    <property type="entry name" value="Lactamase_B_2"/>
    <property type="match status" value="1"/>
</dbReference>
<dbReference type="SMART" id="SM00849">
    <property type="entry name" value="Lactamase_B"/>
    <property type="match status" value="1"/>
</dbReference>
<dbReference type="SUPFAM" id="SSF56281">
    <property type="entry name" value="Metallo-hydrolase/oxidoreductase"/>
    <property type="match status" value="1"/>
</dbReference>